<proteinExistence type="inferred from homology"/>
<gene>
    <name evidence="1" type="primary">purQ</name>
    <name type="ordered locus">BCE_0322</name>
</gene>
<protein>
    <recommendedName>
        <fullName evidence="1">Phosphoribosylformylglycinamidine synthase subunit PurQ</fullName>
        <shortName evidence="1">FGAM synthase</shortName>
        <ecNumber evidence="1">6.3.5.3</ecNumber>
    </recommendedName>
    <alternativeName>
        <fullName evidence="1">Formylglycinamide ribonucleotide amidotransferase subunit I</fullName>
        <shortName evidence="1">FGAR amidotransferase I</shortName>
        <shortName evidence="1">FGAR-AT I</shortName>
    </alternativeName>
    <alternativeName>
        <fullName evidence="1">Glutaminase PurQ</fullName>
        <ecNumber evidence="1">3.5.1.2</ecNumber>
    </alternativeName>
    <alternativeName>
        <fullName evidence="1">Phosphoribosylformylglycinamidine synthase subunit I</fullName>
    </alternativeName>
</protein>
<keyword id="KW-0067">ATP-binding</keyword>
<keyword id="KW-0963">Cytoplasm</keyword>
<keyword id="KW-0315">Glutamine amidotransferase</keyword>
<keyword id="KW-0378">Hydrolase</keyword>
<keyword id="KW-0436">Ligase</keyword>
<keyword id="KW-0547">Nucleotide-binding</keyword>
<keyword id="KW-0658">Purine biosynthesis</keyword>
<comment type="function">
    <text evidence="1">Part of the phosphoribosylformylglycinamidine synthase complex involved in the purines biosynthetic pathway. Catalyzes the ATP-dependent conversion of formylglycinamide ribonucleotide (FGAR) and glutamine to yield formylglycinamidine ribonucleotide (FGAM) and glutamate. The FGAM synthase complex is composed of three subunits. PurQ produces an ammonia molecule by converting glutamine to glutamate. PurL transfers the ammonia molecule to FGAR to form FGAM in an ATP-dependent manner. PurS interacts with PurQ and PurL and is thought to assist in the transfer of the ammonia molecule from PurQ to PurL.</text>
</comment>
<comment type="catalytic activity">
    <reaction evidence="1">
        <text>N(2)-formyl-N(1)-(5-phospho-beta-D-ribosyl)glycinamide + L-glutamine + ATP + H2O = 2-formamido-N(1)-(5-O-phospho-beta-D-ribosyl)acetamidine + L-glutamate + ADP + phosphate + H(+)</text>
        <dbReference type="Rhea" id="RHEA:17129"/>
        <dbReference type="ChEBI" id="CHEBI:15377"/>
        <dbReference type="ChEBI" id="CHEBI:15378"/>
        <dbReference type="ChEBI" id="CHEBI:29985"/>
        <dbReference type="ChEBI" id="CHEBI:30616"/>
        <dbReference type="ChEBI" id="CHEBI:43474"/>
        <dbReference type="ChEBI" id="CHEBI:58359"/>
        <dbReference type="ChEBI" id="CHEBI:147286"/>
        <dbReference type="ChEBI" id="CHEBI:147287"/>
        <dbReference type="ChEBI" id="CHEBI:456216"/>
        <dbReference type="EC" id="6.3.5.3"/>
    </reaction>
</comment>
<comment type="catalytic activity">
    <reaction evidence="1">
        <text>L-glutamine + H2O = L-glutamate + NH4(+)</text>
        <dbReference type="Rhea" id="RHEA:15889"/>
        <dbReference type="ChEBI" id="CHEBI:15377"/>
        <dbReference type="ChEBI" id="CHEBI:28938"/>
        <dbReference type="ChEBI" id="CHEBI:29985"/>
        <dbReference type="ChEBI" id="CHEBI:58359"/>
        <dbReference type="EC" id="3.5.1.2"/>
    </reaction>
</comment>
<comment type="pathway">
    <text evidence="1">Purine metabolism; IMP biosynthesis via de novo pathway; 5-amino-1-(5-phospho-D-ribosyl)imidazole from N(2)-formyl-N(1)-(5-phospho-D-ribosyl)glycinamide: step 1/2.</text>
</comment>
<comment type="subunit">
    <text evidence="1">Part of the FGAM synthase complex composed of 1 PurL, 1 PurQ and 2 PurS subunits.</text>
</comment>
<comment type="subcellular location">
    <subcellularLocation>
        <location evidence="1">Cytoplasm</location>
    </subcellularLocation>
</comment>
<accession>Q73EN6</accession>
<sequence>MKFAVIVFPGSNCDVDMFHAIKDELGEEVDYVWHDTENLDEYDAILLPGGFSYGDYLRCGAISRFANAMKAVQKAAEQGKPILGVCNGFQILVESGLLPGALMRNENLKFMCRTVQLRVENNETMFTSQYEKDEVINIPIAHGEGNYYCDEETLKQLEENNQIAFRYVENPNGSVSDIAGIVNEKGNVLGMMPHPERAVDELLGGAEGLKVFQSILKQWRETYVVNA</sequence>
<feature type="chain" id="PRO_0000100532" description="Phosphoribosylformylglycinamidine synthase subunit PurQ">
    <location>
        <begin position="1"/>
        <end position="227"/>
    </location>
</feature>
<feature type="domain" description="Glutamine amidotransferase type-1" evidence="1">
    <location>
        <begin position="3"/>
        <end position="225"/>
    </location>
</feature>
<feature type="active site" description="Nucleophile" evidence="1">
    <location>
        <position position="86"/>
    </location>
</feature>
<feature type="active site" evidence="1">
    <location>
        <position position="194"/>
    </location>
</feature>
<feature type="active site" evidence="1">
    <location>
        <position position="196"/>
    </location>
</feature>
<organism>
    <name type="scientific">Bacillus cereus (strain ATCC 10987 / NRS 248)</name>
    <dbReference type="NCBI Taxonomy" id="222523"/>
    <lineage>
        <taxon>Bacteria</taxon>
        <taxon>Bacillati</taxon>
        <taxon>Bacillota</taxon>
        <taxon>Bacilli</taxon>
        <taxon>Bacillales</taxon>
        <taxon>Bacillaceae</taxon>
        <taxon>Bacillus</taxon>
        <taxon>Bacillus cereus group</taxon>
    </lineage>
</organism>
<name>PURQ_BACC1</name>
<reference key="1">
    <citation type="journal article" date="2004" name="Nucleic Acids Res.">
        <title>The genome sequence of Bacillus cereus ATCC 10987 reveals metabolic adaptations and a large plasmid related to Bacillus anthracis pXO1.</title>
        <authorList>
            <person name="Rasko D.A."/>
            <person name="Ravel J."/>
            <person name="Oekstad O.A."/>
            <person name="Helgason E."/>
            <person name="Cer R.Z."/>
            <person name="Jiang L."/>
            <person name="Shores K.A."/>
            <person name="Fouts D.E."/>
            <person name="Tourasse N.J."/>
            <person name="Angiuoli S.V."/>
            <person name="Kolonay J.F."/>
            <person name="Nelson W.C."/>
            <person name="Kolstoe A.-B."/>
            <person name="Fraser C.M."/>
            <person name="Read T.D."/>
        </authorList>
    </citation>
    <scope>NUCLEOTIDE SEQUENCE [LARGE SCALE GENOMIC DNA]</scope>
    <source>
        <strain>ATCC 10987 / NRS 248</strain>
    </source>
</reference>
<dbReference type="EC" id="6.3.5.3" evidence="1"/>
<dbReference type="EC" id="3.5.1.2" evidence="1"/>
<dbReference type="EMBL" id="AE017194">
    <property type="protein sequence ID" value="AAS39258.1"/>
    <property type="molecule type" value="Genomic_DNA"/>
</dbReference>
<dbReference type="SMR" id="Q73EN6"/>
<dbReference type="KEGG" id="bca:BCE_0322"/>
<dbReference type="HOGENOM" id="CLU_001031_3_1_9"/>
<dbReference type="UniPathway" id="UPA00074">
    <property type="reaction ID" value="UER00128"/>
</dbReference>
<dbReference type="Proteomes" id="UP000002527">
    <property type="component" value="Chromosome"/>
</dbReference>
<dbReference type="GO" id="GO:0005737">
    <property type="term" value="C:cytoplasm"/>
    <property type="evidence" value="ECO:0007669"/>
    <property type="project" value="UniProtKB-SubCell"/>
</dbReference>
<dbReference type="GO" id="GO:0005524">
    <property type="term" value="F:ATP binding"/>
    <property type="evidence" value="ECO:0007669"/>
    <property type="project" value="UniProtKB-KW"/>
</dbReference>
<dbReference type="GO" id="GO:0004359">
    <property type="term" value="F:glutaminase activity"/>
    <property type="evidence" value="ECO:0007669"/>
    <property type="project" value="UniProtKB-EC"/>
</dbReference>
<dbReference type="GO" id="GO:0004642">
    <property type="term" value="F:phosphoribosylformylglycinamidine synthase activity"/>
    <property type="evidence" value="ECO:0007669"/>
    <property type="project" value="UniProtKB-UniRule"/>
</dbReference>
<dbReference type="GO" id="GO:0006189">
    <property type="term" value="P:'de novo' IMP biosynthetic process"/>
    <property type="evidence" value="ECO:0007669"/>
    <property type="project" value="UniProtKB-UniRule"/>
</dbReference>
<dbReference type="CDD" id="cd01740">
    <property type="entry name" value="GATase1_FGAR_AT"/>
    <property type="match status" value="1"/>
</dbReference>
<dbReference type="FunFam" id="3.40.50.880:FF:000019">
    <property type="entry name" value="Phosphoribosylformylglycinamidine synthase subunit PurQ"/>
    <property type="match status" value="1"/>
</dbReference>
<dbReference type="Gene3D" id="3.40.50.880">
    <property type="match status" value="1"/>
</dbReference>
<dbReference type="HAMAP" id="MF_00421">
    <property type="entry name" value="PurQ"/>
    <property type="match status" value="1"/>
</dbReference>
<dbReference type="InterPro" id="IPR029062">
    <property type="entry name" value="Class_I_gatase-like"/>
</dbReference>
<dbReference type="InterPro" id="IPR010075">
    <property type="entry name" value="PRibForGlyAmidine_synth_PurQ"/>
</dbReference>
<dbReference type="NCBIfam" id="TIGR01737">
    <property type="entry name" value="FGAM_synth_I"/>
    <property type="match status" value="1"/>
</dbReference>
<dbReference type="NCBIfam" id="NF002957">
    <property type="entry name" value="PRK03619.1"/>
    <property type="match status" value="1"/>
</dbReference>
<dbReference type="PANTHER" id="PTHR47552">
    <property type="entry name" value="PHOSPHORIBOSYLFORMYLGLYCINAMIDINE SYNTHASE SUBUNIT PURQ"/>
    <property type="match status" value="1"/>
</dbReference>
<dbReference type="PANTHER" id="PTHR47552:SF1">
    <property type="entry name" value="PHOSPHORIBOSYLFORMYLGLYCINAMIDINE SYNTHASE SUBUNIT PURQ"/>
    <property type="match status" value="1"/>
</dbReference>
<dbReference type="Pfam" id="PF13507">
    <property type="entry name" value="GATase_5"/>
    <property type="match status" value="1"/>
</dbReference>
<dbReference type="PIRSF" id="PIRSF001586">
    <property type="entry name" value="FGAM_synth_I"/>
    <property type="match status" value="1"/>
</dbReference>
<dbReference type="SMART" id="SM01211">
    <property type="entry name" value="GATase_5"/>
    <property type="match status" value="1"/>
</dbReference>
<dbReference type="SUPFAM" id="SSF52317">
    <property type="entry name" value="Class I glutamine amidotransferase-like"/>
    <property type="match status" value="1"/>
</dbReference>
<dbReference type="PROSITE" id="PS51273">
    <property type="entry name" value="GATASE_TYPE_1"/>
    <property type="match status" value="1"/>
</dbReference>
<evidence type="ECO:0000255" key="1">
    <source>
        <dbReference type="HAMAP-Rule" id="MF_00421"/>
    </source>
</evidence>